<comment type="similarity">
    <text evidence="1">Belongs to the bacterial ribosomal protein bL28 family.</text>
</comment>
<keyword id="KW-0687">Ribonucleoprotein</keyword>
<keyword id="KW-0689">Ribosomal protein</keyword>
<feature type="chain" id="PRO_1000007199" description="Large ribosomal subunit protein bL28">
    <location>
        <begin position="1"/>
        <end position="63"/>
    </location>
</feature>
<feature type="region of interest" description="Disordered" evidence="2">
    <location>
        <begin position="1"/>
        <end position="20"/>
    </location>
</feature>
<proteinExistence type="inferred from homology"/>
<reference key="1">
    <citation type="submission" date="2006-11" db="EMBL/GenBank/DDBJ databases">
        <title>Sequence of Campylobacter fetus subsp. fetus 82-40.</title>
        <authorList>
            <person name="Fouts D.E."/>
            <person name="Nelson K.E."/>
        </authorList>
    </citation>
    <scope>NUCLEOTIDE SEQUENCE [LARGE SCALE GENOMIC DNA]</scope>
    <source>
        <strain>82-40</strain>
    </source>
</reference>
<organism>
    <name type="scientific">Campylobacter fetus subsp. fetus (strain 82-40)</name>
    <dbReference type="NCBI Taxonomy" id="360106"/>
    <lineage>
        <taxon>Bacteria</taxon>
        <taxon>Pseudomonadati</taxon>
        <taxon>Campylobacterota</taxon>
        <taxon>Epsilonproteobacteria</taxon>
        <taxon>Campylobacterales</taxon>
        <taxon>Campylobacteraceae</taxon>
        <taxon>Campylobacter</taxon>
    </lineage>
</organism>
<accession>A0RPK6</accession>
<protein>
    <recommendedName>
        <fullName evidence="1">Large ribosomal subunit protein bL28</fullName>
    </recommendedName>
    <alternativeName>
        <fullName evidence="3">50S ribosomal protein L28</fullName>
    </alternativeName>
</protein>
<name>RL28_CAMFF</name>
<gene>
    <name evidence="1" type="primary">rpmB</name>
    <name type="ordered locus">CFF8240_0971</name>
</gene>
<dbReference type="EMBL" id="CP000487">
    <property type="protein sequence ID" value="ABK83374.1"/>
    <property type="molecule type" value="Genomic_DNA"/>
</dbReference>
<dbReference type="RefSeq" id="WP_002849521.1">
    <property type="nucleotide sequence ID" value="NC_008599.1"/>
</dbReference>
<dbReference type="SMR" id="A0RPK6"/>
<dbReference type="GeneID" id="61064801"/>
<dbReference type="KEGG" id="cff:CFF8240_0971"/>
<dbReference type="eggNOG" id="COG0227">
    <property type="taxonomic scope" value="Bacteria"/>
</dbReference>
<dbReference type="HOGENOM" id="CLU_064548_7_2_7"/>
<dbReference type="Proteomes" id="UP000000760">
    <property type="component" value="Chromosome"/>
</dbReference>
<dbReference type="GO" id="GO:1990904">
    <property type="term" value="C:ribonucleoprotein complex"/>
    <property type="evidence" value="ECO:0007669"/>
    <property type="project" value="UniProtKB-KW"/>
</dbReference>
<dbReference type="GO" id="GO:0005840">
    <property type="term" value="C:ribosome"/>
    <property type="evidence" value="ECO:0007669"/>
    <property type="project" value="UniProtKB-KW"/>
</dbReference>
<dbReference type="GO" id="GO:0003735">
    <property type="term" value="F:structural constituent of ribosome"/>
    <property type="evidence" value="ECO:0007669"/>
    <property type="project" value="InterPro"/>
</dbReference>
<dbReference type="GO" id="GO:0006412">
    <property type="term" value="P:translation"/>
    <property type="evidence" value="ECO:0007669"/>
    <property type="project" value="UniProtKB-UniRule"/>
</dbReference>
<dbReference type="Gene3D" id="2.20.150.30">
    <property type="match status" value="1"/>
</dbReference>
<dbReference type="Gene3D" id="2.30.170.40">
    <property type="entry name" value="Ribosomal protein L28/L24"/>
    <property type="match status" value="1"/>
</dbReference>
<dbReference type="HAMAP" id="MF_00373">
    <property type="entry name" value="Ribosomal_bL28"/>
    <property type="match status" value="1"/>
</dbReference>
<dbReference type="InterPro" id="IPR050096">
    <property type="entry name" value="Bacterial_rp_bL28"/>
</dbReference>
<dbReference type="InterPro" id="IPR026569">
    <property type="entry name" value="Ribosomal_bL28"/>
</dbReference>
<dbReference type="InterPro" id="IPR034704">
    <property type="entry name" value="Ribosomal_bL28/bL31-like_sf"/>
</dbReference>
<dbReference type="InterPro" id="IPR001383">
    <property type="entry name" value="Ribosomal_bL28_bact-type"/>
</dbReference>
<dbReference type="InterPro" id="IPR037147">
    <property type="entry name" value="Ribosomal_bL28_sf"/>
</dbReference>
<dbReference type="NCBIfam" id="TIGR00009">
    <property type="entry name" value="L28"/>
    <property type="match status" value="1"/>
</dbReference>
<dbReference type="PANTHER" id="PTHR39080">
    <property type="entry name" value="50S RIBOSOMAL PROTEIN L28"/>
    <property type="match status" value="1"/>
</dbReference>
<dbReference type="PANTHER" id="PTHR39080:SF1">
    <property type="entry name" value="LARGE RIBOSOMAL SUBUNIT PROTEIN BL28A"/>
    <property type="match status" value="1"/>
</dbReference>
<dbReference type="Pfam" id="PF00830">
    <property type="entry name" value="Ribosomal_L28"/>
    <property type="match status" value="1"/>
</dbReference>
<dbReference type="SUPFAM" id="SSF143800">
    <property type="entry name" value="L28p-like"/>
    <property type="match status" value="1"/>
</dbReference>
<sequence>MSKRCAITGKGPMVGNNVSHANNRTKRRFMPNLRTVRVMLEDGTTRKIRVAASTLRTMKKQSH</sequence>
<evidence type="ECO:0000255" key="1">
    <source>
        <dbReference type="HAMAP-Rule" id="MF_00373"/>
    </source>
</evidence>
<evidence type="ECO:0000256" key="2">
    <source>
        <dbReference type="SAM" id="MobiDB-lite"/>
    </source>
</evidence>
<evidence type="ECO:0000305" key="3"/>